<organism>
    <name type="scientific">Pseudomonas knackmussii (strain DSM 6978 / CCUG 54928 / LMG 23759 / B13)</name>
    <dbReference type="NCBI Taxonomy" id="1301098"/>
    <lineage>
        <taxon>Bacteria</taxon>
        <taxon>Pseudomonadati</taxon>
        <taxon>Pseudomonadota</taxon>
        <taxon>Gammaproteobacteria</taxon>
        <taxon>Pseudomonadales</taxon>
        <taxon>Pseudomonadaceae</taxon>
        <taxon>Pseudomonas</taxon>
    </lineage>
</organism>
<sequence>MNFIHDYRSPRVIFGPDSLARLPQELERLGIDRALVLTTPEQAPLGRQVAEPVIGHVAAFYDGATMHVPALVAEEACKIARTSEANGVIAIGGGSTIGLAKIVALRTELPIVAVPTTYAGSEMTSIFGITEGGVKKTGRDARVMPRAVIYEPRLTLELPLSISVTSAINAIAHAVEGLYAPDATPLLTIMAQEGIAATVRAISRMYQSPRDLQARGDALYGAWLCASVLGNVSMALHHKLCHTLGGTLDLPHAQTHTVVLPHALAYNARAVPDAMRVLRIALGHDDPPTALYELARDNGAPVALRDLGMREEDIEHVGDLALQDRYPNPRELDRDALLALLRDAYHGRPPSA</sequence>
<dbReference type="EC" id="1.3.1.32"/>
<dbReference type="EMBL" id="AF019038">
    <property type="protein sequence ID" value="AAB71540.1"/>
    <property type="molecule type" value="Genomic_DNA"/>
</dbReference>
<dbReference type="RefSeq" id="WP_011489357.1">
    <property type="nucleotide sequence ID" value="NZ_HG322950.1"/>
</dbReference>
<dbReference type="SMR" id="O30847"/>
<dbReference type="STRING" id="1301098.PKB_3277"/>
<dbReference type="eggNOG" id="COG1454">
    <property type="taxonomic scope" value="Bacteria"/>
</dbReference>
<dbReference type="OrthoDB" id="3812122at2"/>
<dbReference type="BioCyc" id="MetaCyc:MONOMER-14383"/>
<dbReference type="UniPathway" id="UPA00083"/>
<dbReference type="GO" id="GO:0004022">
    <property type="term" value="F:alcohol dehydrogenase (NAD+) activity"/>
    <property type="evidence" value="ECO:0007669"/>
    <property type="project" value="TreeGrafter"/>
</dbReference>
<dbReference type="GO" id="GO:0018506">
    <property type="term" value="F:maleylacetate reductase activity"/>
    <property type="evidence" value="ECO:0000314"/>
    <property type="project" value="CACAO"/>
</dbReference>
<dbReference type="GO" id="GO:0046872">
    <property type="term" value="F:metal ion binding"/>
    <property type="evidence" value="ECO:0007669"/>
    <property type="project" value="InterPro"/>
</dbReference>
<dbReference type="GO" id="GO:0009056">
    <property type="term" value="P:catabolic process"/>
    <property type="evidence" value="ECO:0007669"/>
    <property type="project" value="UniProtKB-KW"/>
</dbReference>
<dbReference type="CDD" id="cd08177">
    <property type="entry name" value="MAR"/>
    <property type="match status" value="1"/>
</dbReference>
<dbReference type="FunFam" id="1.20.1090.10:FF:000010">
    <property type="entry name" value="Maleylacetate reductase 1"/>
    <property type="match status" value="1"/>
</dbReference>
<dbReference type="FunFam" id="3.40.50.1970:FF:000015">
    <property type="entry name" value="Maleylacetate reductase 1"/>
    <property type="match status" value="1"/>
</dbReference>
<dbReference type="Gene3D" id="3.40.50.1970">
    <property type="match status" value="1"/>
</dbReference>
<dbReference type="Gene3D" id="1.20.1090.10">
    <property type="entry name" value="Dehydroquinate synthase-like - alpha domain"/>
    <property type="match status" value="1"/>
</dbReference>
<dbReference type="InterPro" id="IPR001670">
    <property type="entry name" value="ADH_Fe/GldA"/>
</dbReference>
<dbReference type="InterPro" id="IPR056798">
    <property type="entry name" value="ADH_Fe_C"/>
</dbReference>
<dbReference type="InterPro" id="IPR039697">
    <property type="entry name" value="Alcohol_dehydrogenase_Fe"/>
</dbReference>
<dbReference type="InterPro" id="IPR034786">
    <property type="entry name" value="MAR"/>
</dbReference>
<dbReference type="PANTHER" id="PTHR11496">
    <property type="entry name" value="ALCOHOL DEHYDROGENASE"/>
    <property type="match status" value="1"/>
</dbReference>
<dbReference type="PANTHER" id="PTHR11496:SF102">
    <property type="entry name" value="ALCOHOL DEHYDROGENASE 4"/>
    <property type="match status" value="1"/>
</dbReference>
<dbReference type="Pfam" id="PF25137">
    <property type="entry name" value="ADH_Fe_C"/>
    <property type="match status" value="1"/>
</dbReference>
<dbReference type="Pfam" id="PF00465">
    <property type="entry name" value="Fe-ADH"/>
    <property type="match status" value="1"/>
</dbReference>
<dbReference type="SUPFAM" id="SSF56796">
    <property type="entry name" value="Dehydroquinate synthase-like"/>
    <property type="match status" value="1"/>
</dbReference>
<feature type="chain" id="PRO_0000087846" description="Maleylacetate reductase">
    <location>
        <begin position="1"/>
        <end position="352"/>
    </location>
</feature>
<reference key="1">
    <citation type="journal article" date="1997" name="J. Bacteriol.">
        <title>Cloning, characterization, and sequence analysis of the clcE gene encoding the maleylacetate reductase of Pseudomonas sp. strain B13.</title>
        <authorList>
            <person name="Kasberg T."/>
            <person name="Seibert V."/>
            <person name="Schlomann M."/>
            <person name="Reineke W."/>
        </authorList>
    </citation>
    <scope>NUCLEOTIDE SEQUENCE [GENOMIC DNA]</scope>
</reference>
<comment type="catalytic activity">
    <reaction>
        <text>3-oxoadipate + NAD(+) = maleylacetate + NADH + H(+)</text>
        <dbReference type="Rhea" id="RHEA:16981"/>
        <dbReference type="ChEBI" id="CHEBI:15378"/>
        <dbReference type="ChEBI" id="CHEBI:15775"/>
        <dbReference type="ChEBI" id="CHEBI:16468"/>
        <dbReference type="ChEBI" id="CHEBI:57540"/>
        <dbReference type="ChEBI" id="CHEBI:57945"/>
        <dbReference type="EC" id="1.3.1.32"/>
    </reaction>
</comment>
<comment type="catalytic activity">
    <reaction>
        <text>3-oxoadipate + NADP(+) = maleylacetate + NADPH + H(+)</text>
        <dbReference type="Rhea" id="RHEA:16985"/>
        <dbReference type="ChEBI" id="CHEBI:15378"/>
        <dbReference type="ChEBI" id="CHEBI:15775"/>
        <dbReference type="ChEBI" id="CHEBI:16468"/>
        <dbReference type="ChEBI" id="CHEBI:57783"/>
        <dbReference type="ChEBI" id="CHEBI:58349"/>
        <dbReference type="EC" id="1.3.1.32"/>
    </reaction>
</comment>
<comment type="pathway">
    <text>Aromatic compound metabolism; 3-chlorocatechol degradation.</text>
</comment>
<comment type="similarity">
    <text evidence="1">Belongs to the iron-containing alcohol dehydrogenase family.</text>
</comment>
<evidence type="ECO:0000305" key="1"/>
<gene>
    <name type="primary">clcE</name>
</gene>
<name>CLCE_PSEKB</name>
<keyword id="KW-0058">Aromatic hydrocarbons catabolism</keyword>
<keyword id="KW-0520">NAD</keyword>
<keyword id="KW-0560">Oxidoreductase</keyword>
<keyword id="KW-0614">Plasmid</keyword>
<accession>O30847</accession>
<protein>
    <recommendedName>
        <fullName>Maleylacetate reductase</fullName>
        <ecNumber>1.3.1.32</ecNumber>
    </recommendedName>
</protein>
<proteinExistence type="inferred from homology"/>